<keyword id="KW-0963">Cytoplasm</keyword>
<keyword id="KW-0378">Hydrolase</keyword>
<sequence length="116" mass="12678">MYEQAIVIRNDLKMGKGKMAAQACHASLQAFLHAQKISSSAVSGWMNEGQKKVVLKVNSEKELLEIFKNVNIEGLPCSLIRDAGRTQIEPGSLTAVGIGPEKEEKISKVTKDLKLL</sequence>
<proteinExistence type="inferred from homology"/>
<comment type="function">
    <text evidence="1">The natural substrate for this enzyme may be peptidyl-tRNAs which drop off the ribosome during protein synthesis.</text>
</comment>
<comment type="catalytic activity">
    <reaction evidence="1">
        <text>an N-acyl-L-alpha-aminoacyl-tRNA + H2O = an N-acyl-L-amino acid + a tRNA + H(+)</text>
        <dbReference type="Rhea" id="RHEA:54448"/>
        <dbReference type="Rhea" id="RHEA-COMP:10123"/>
        <dbReference type="Rhea" id="RHEA-COMP:13883"/>
        <dbReference type="ChEBI" id="CHEBI:15377"/>
        <dbReference type="ChEBI" id="CHEBI:15378"/>
        <dbReference type="ChEBI" id="CHEBI:59874"/>
        <dbReference type="ChEBI" id="CHEBI:78442"/>
        <dbReference type="ChEBI" id="CHEBI:138191"/>
        <dbReference type="EC" id="3.1.1.29"/>
    </reaction>
</comment>
<comment type="subcellular location">
    <subcellularLocation>
        <location evidence="1">Cytoplasm</location>
    </subcellularLocation>
</comment>
<comment type="similarity">
    <text evidence="1">Belongs to the PTH2 family.</text>
</comment>
<organism>
    <name type="scientific">Methanococcus maripaludis (strain C6 / ATCC BAA-1332)</name>
    <dbReference type="NCBI Taxonomy" id="444158"/>
    <lineage>
        <taxon>Archaea</taxon>
        <taxon>Methanobacteriati</taxon>
        <taxon>Methanobacteriota</taxon>
        <taxon>Methanomada group</taxon>
        <taxon>Methanococci</taxon>
        <taxon>Methanococcales</taxon>
        <taxon>Methanococcaceae</taxon>
        <taxon>Methanococcus</taxon>
    </lineage>
</organism>
<reference key="1">
    <citation type="submission" date="2007-10" db="EMBL/GenBank/DDBJ databases">
        <title>Complete sequence of Methanococcus maripaludis C6.</title>
        <authorList>
            <consortium name="US DOE Joint Genome Institute"/>
            <person name="Copeland A."/>
            <person name="Lucas S."/>
            <person name="Lapidus A."/>
            <person name="Barry K."/>
            <person name="Glavina del Rio T."/>
            <person name="Dalin E."/>
            <person name="Tice H."/>
            <person name="Pitluck S."/>
            <person name="Clum A."/>
            <person name="Schmutz J."/>
            <person name="Larimer F."/>
            <person name="Land M."/>
            <person name="Hauser L."/>
            <person name="Kyrpides N."/>
            <person name="Mikhailova N."/>
            <person name="Sieprawska-Lupa M."/>
            <person name="Whitman W.B."/>
            <person name="Richardson P."/>
        </authorList>
    </citation>
    <scope>NUCLEOTIDE SEQUENCE [LARGE SCALE GENOMIC DNA]</scope>
    <source>
        <strain>C6 / ATCC BAA-1332</strain>
    </source>
</reference>
<evidence type="ECO:0000255" key="1">
    <source>
        <dbReference type="HAMAP-Rule" id="MF_00628"/>
    </source>
</evidence>
<name>PTH_METM6</name>
<accession>A9A6B6</accession>
<feature type="chain" id="PRO_1000130578" description="Peptidyl-tRNA hydrolase">
    <location>
        <begin position="1"/>
        <end position="116"/>
    </location>
</feature>
<dbReference type="EC" id="3.1.1.29" evidence="1"/>
<dbReference type="EMBL" id="CP000867">
    <property type="protein sequence ID" value="ABX01104.1"/>
    <property type="molecule type" value="Genomic_DNA"/>
</dbReference>
<dbReference type="SMR" id="A9A6B6"/>
<dbReference type="STRING" id="444158.MmarC6_0283"/>
<dbReference type="KEGG" id="mmx:MmarC6_0283"/>
<dbReference type="eggNOG" id="arCOG04228">
    <property type="taxonomic scope" value="Archaea"/>
</dbReference>
<dbReference type="HOGENOM" id="CLU_073661_2_2_2"/>
<dbReference type="OrthoDB" id="6075at2157"/>
<dbReference type="PhylomeDB" id="A9A6B6"/>
<dbReference type="GO" id="GO:0005829">
    <property type="term" value="C:cytosol"/>
    <property type="evidence" value="ECO:0007669"/>
    <property type="project" value="TreeGrafter"/>
</dbReference>
<dbReference type="GO" id="GO:0004045">
    <property type="term" value="F:peptidyl-tRNA hydrolase activity"/>
    <property type="evidence" value="ECO:0007669"/>
    <property type="project" value="UniProtKB-UniRule"/>
</dbReference>
<dbReference type="GO" id="GO:0006412">
    <property type="term" value="P:translation"/>
    <property type="evidence" value="ECO:0007669"/>
    <property type="project" value="UniProtKB-UniRule"/>
</dbReference>
<dbReference type="CDD" id="cd02430">
    <property type="entry name" value="PTH2"/>
    <property type="match status" value="1"/>
</dbReference>
<dbReference type="FunFam" id="3.40.1490.10:FF:000001">
    <property type="entry name" value="Peptidyl-tRNA hydrolase 2"/>
    <property type="match status" value="1"/>
</dbReference>
<dbReference type="Gene3D" id="3.40.1490.10">
    <property type="entry name" value="Bit1"/>
    <property type="match status" value="1"/>
</dbReference>
<dbReference type="HAMAP" id="MF_00628">
    <property type="entry name" value="Pept_tRNA_hydro_arch"/>
    <property type="match status" value="1"/>
</dbReference>
<dbReference type="InterPro" id="IPR023476">
    <property type="entry name" value="Pep_tRNA_hydro_II_dom_sf"/>
</dbReference>
<dbReference type="InterPro" id="IPR034759">
    <property type="entry name" value="Pept_tRNA_hydro_arch"/>
</dbReference>
<dbReference type="InterPro" id="IPR002833">
    <property type="entry name" value="PTH2"/>
</dbReference>
<dbReference type="NCBIfam" id="TIGR00283">
    <property type="entry name" value="arch_pth2"/>
    <property type="match status" value="1"/>
</dbReference>
<dbReference type="NCBIfam" id="NF003314">
    <property type="entry name" value="PRK04322.1"/>
    <property type="match status" value="1"/>
</dbReference>
<dbReference type="PANTHER" id="PTHR12649">
    <property type="entry name" value="PEPTIDYL-TRNA HYDROLASE 2"/>
    <property type="match status" value="1"/>
</dbReference>
<dbReference type="PANTHER" id="PTHR12649:SF11">
    <property type="entry name" value="PEPTIDYL-TRNA HYDROLASE 2, MITOCHONDRIAL"/>
    <property type="match status" value="1"/>
</dbReference>
<dbReference type="Pfam" id="PF01981">
    <property type="entry name" value="PTH2"/>
    <property type="match status" value="1"/>
</dbReference>
<dbReference type="SUPFAM" id="SSF102462">
    <property type="entry name" value="Peptidyl-tRNA hydrolase II"/>
    <property type="match status" value="1"/>
</dbReference>
<protein>
    <recommendedName>
        <fullName evidence="1">Peptidyl-tRNA hydrolase</fullName>
        <shortName evidence="1">PTH</shortName>
        <ecNumber evidence="1">3.1.1.29</ecNumber>
    </recommendedName>
</protein>
<gene>
    <name evidence="1" type="primary">pth</name>
    <name type="ordered locus">MmarC6_0283</name>
</gene>